<protein>
    <recommendedName>
        <fullName evidence="2">Rifampicin monooxygenase</fullName>
        <shortName>RIFMO</shortName>
        <ecNumber evidence="1">1.14.13.211</ecNumber>
    </recommendedName>
</protein>
<feature type="chain" id="PRO_0000446369" description="Rifampicin monooxygenase">
    <location>
        <begin position="1"/>
        <end position="476"/>
    </location>
</feature>
<feature type="binding site" evidence="1 4 5">
    <location>
        <position position="12"/>
    </location>
    <ligand>
        <name>FAD</name>
        <dbReference type="ChEBI" id="CHEBI:57692"/>
    </ligand>
</feature>
<feature type="binding site" evidence="1 4 5">
    <location>
        <position position="31"/>
    </location>
    <ligand>
        <name>FAD</name>
        <dbReference type="ChEBI" id="CHEBI:57692"/>
    </ligand>
</feature>
<feature type="binding site" evidence="1 4 5">
    <location>
        <position position="32"/>
    </location>
    <ligand>
        <name>FAD</name>
        <dbReference type="ChEBI" id="CHEBI:57692"/>
    </ligand>
</feature>
<feature type="binding site" evidence="1 4 5">
    <location>
        <position position="98"/>
    </location>
    <ligand>
        <name>FAD</name>
        <dbReference type="ChEBI" id="CHEBI:57692"/>
    </ligand>
</feature>
<feature type="binding site" evidence="1 4 5">
    <location>
        <position position="122"/>
    </location>
    <ligand>
        <name>FAD</name>
        <dbReference type="ChEBI" id="CHEBI:57692"/>
    </ligand>
</feature>
<feature type="binding site" evidence="1 4 5">
    <location>
        <position position="156"/>
    </location>
    <ligand>
        <name>FAD</name>
        <dbReference type="ChEBI" id="CHEBI:57692"/>
    </ligand>
</feature>
<feature type="binding site" evidence="1 5">
    <location>
        <position position="196"/>
    </location>
    <ligand>
        <name>rifampicin</name>
        <dbReference type="ChEBI" id="CHEBI:71365"/>
    </ligand>
</feature>
<feature type="binding site" evidence="1 5">
    <location>
        <position position="213"/>
    </location>
    <ligand>
        <name>rifampicin</name>
        <dbReference type="ChEBI" id="CHEBI:71365"/>
    </ligand>
</feature>
<feature type="binding site" evidence="1 4 5">
    <location>
        <position position="277"/>
    </location>
    <ligand>
        <name>FAD</name>
        <dbReference type="ChEBI" id="CHEBI:57692"/>
    </ligand>
</feature>
<feature type="binding site" evidence="1 4 5">
    <location>
        <position position="290"/>
    </location>
    <ligand>
        <name>FAD</name>
        <dbReference type="ChEBI" id="CHEBI:57692"/>
    </ligand>
</feature>
<feature type="binding site" evidence="1 4 5">
    <location>
        <position position="291"/>
    </location>
    <ligand>
        <name>FAD</name>
        <dbReference type="ChEBI" id="CHEBI:57692"/>
    </ligand>
</feature>
<feature type="strand" evidence="7">
    <location>
        <begin position="2"/>
        <end position="7"/>
    </location>
</feature>
<feature type="helix" evidence="7">
    <location>
        <begin position="11"/>
        <end position="21"/>
    </location>
</feature>
<feature type="turn" evidence="6">
    <location>
        <begin position="22"/>
        <end position="24"/>
    </location>
</feature>
<feature type="strand" evidence="7">
    <location>
        <begin position="27"/>
        <end position="32"/>
    </location>
</feature>
<feature type="helix" evidence="7">
    <location>
        <begin position="47"/>
        <end position="55"/>
    </location>
</feature>
<feature type="helix" evidence="7">
    <location>
        <begin position="59"/>
        <end position="64"/>
    </location>
</feature>
<feature type="strand" evidence="7">
    <location>
        <begin position="66"/>
        <end position="69"/>
    </location>
</feature>
<feature type="strand" evidence="7">
    <location>
        <begin position="87"/>
        <end position="89"/>
    </location>
</feature>
<feature type="strand" evidence="7">
    <location>
        <begin position="92"/>
        <end position="95"/>
    </location>
</feature>
<feature type="helix" evidence="7">
    <location>
        <begin position="98"/>
        <end position="111"/>
    </location>
</feature>
<feature type="strand" evidence="7">
    <location>
        <begin position="115"/>
        <end position="119"/>
    </location>
</feature>
<feature type="strand" evidence="7">
    <location>
        <begin position="122"/>
        <end position="127"/>
    </location>
</feature>
<feature type="strand" evidence="7">
    <location>
        <begin position="132"/>
        <end position="139"/>
    </location>
</feature>
<feature type="strand" evidence="7">
    <location>
        <begin position="141"/>
        <end position="149"/>
    </location>
</feature>
<feature type="helix" evidence="7">
    <location>
        <begin position="156"/>
        <end position="159"/>
    </location>
</feature>
<feature type="turn" evidence="7">
    <location>
        <begin position="160"/>
        <end position="162"/>
    </location>
</feature>
<feature type="strand" evidence="7">
    <location>
        <begin position="174"/>
        <end position="179"/>
    </location>
</feature>
<feature type="strand" evidence="6">
    <location>
        <begin position="181"/>
        <end position="183"/>
    </location>
</feature>
<feature type="helix" evidence="7">
    <location>
        <begin position="185"/>
        <end position="195"/>
    </location>
</feature>
<feature type="turn" evidence="7">
    <location>
        <begin position="196"/>
        <end position="198"/>
    </location>
</feature>
<feature type="strand" evidence="7">
    <location>
        <begin position="203"/>
        <end position="206"/>
    </location>
</feature>
<feature type="strand" evidence="7">
    <location>
        <begin position="208"/>
        <end position="217"/>
    </location>
</feature>
<feature type="strand" evidence="7">
    <location>
        <begin position="223"/>
        <end position="226"/>
    </location>
</feature>
<feature type="helix" evidence="7">
    <location>
        <begin position="231"/>
        <end position="242"/>
    </location>
</feature>
<feature type="strand" evidence="7">
    <location>
        <begin position="251"/>
        <end position="257"/>
    </location>
</feature>
<feature type="strand" evidence="7">
    <location>
        <begin position="261"/>
        <end position="263"/>
    </location>
</feature>
<feature type="strand" evidence="7">
    <location>
        <begin position="267"/>
        <end position="269"/>
    </location>
</feature>
<feature type="strand" evidence="7">
    <location>
        <begin position="272"/>
        <end position="274"/>
    </location>
</feature>
<feature type="helix" evidence="7">
    <location>
        <begin position="276"/>
        <end position="278"/>
    </location>
</feature>
<feature type="helix" evidence="7">
    <location>
        <begin position="289"/>
        <end position="308"/>
    </location>
</feature>
<feature type="turn" evidence="7">
    <location>
        <begin position="314"/>
        <end position="317"/>
    </location>
</feature>
<feature type="helix" evidence="7">
    <location>
        <begin position="318"/>
        <end position="340"/>
    </location>
</feature>
<feature type="helix" evidence="7">
    <location>
        <begin position="346"/>
        <end position="358"/>
    </location>
</feature>
<feature type="helix" evidence="7">
    <location>
        <begin position="362"/>
        <end position="372"/>
    </location>
</feature>
<feature type="turn" evidence="7">
    <location>
        <begin position="373"/>
        <end position="376"/>
    </location>
</feature>
<feature type="strand" evidence="6">
    <location>
        <begin position="383"/>
        <end position="385"/>
    </location>
</feature>
<feature type="turn" evidence="7">
    <location>
        <begin position="386"/>
        <end position="389"/>
    </location>
</feature>
<feature type="strand" evidence="7">
    <location>
        <begin position="398"/>
        <end position="402"/>
    </location>
</feature>
<feature type="helix" evidence="6">
    <location>
        <begin position="403"/>
        <end position="405"/>
    </location>
</feature>
<feature type="strand" evidence="7">
    <location>
        <begin position="411"/>
        <end position="418"/>
    </location>
</feature>
<feature type="turn" evidence="7">
    <location>
        <begin position="426"/>
        <end position="428"/>
    </location>
</feature>
<feature type="strand" evidence="7">
    <location>
        <begin position="429"/>
        <end position="433"/>
    </location>
</feature>
<feature type="strand" evidence="7">
    <location>
        <begin position="441"/>
        <end position="446"/>
    </location>
</feature>
<feature type="strand" evidence="7">
    <location>
        <begin position="450"/>
        <end position="457"/>
    </location>
</feature>
<feature type="helix" evidence="7">
    <location>
        <begin position="459"/>
        <end position="470"/>
    </location>
</feature>
<organism>
    <name type="scientific">Streptomyces venezuelae (strain ATCC 10712 / CBS 650.69 / DSM 40230 / JCM 4526 / NBRC 13096 / PD 04745)</name>
    <dbReference type="NCBI Taxonomy" id="953739"/>
    <lineage>
        <taxon>Bacteria</taxon>
        <taxon>Bacillati</taxon>
        <taxon>Actinomycetota</taxon>
        <taxon>Actinomycetes</taxon>
        <taxon>Kitasatosporales</taxon>
        <taxon>Streptomycetaceae</taxon>
        <taxon>Streptomyces</taxon>
    </lineage>
</organism>
<gene>
    <name evidence="2" type="primary">rox</name>
    <name type="ordered locus">SVEN_0481</name>
</gene>
<comment type="function">
    <text evidence="1">Monooxygenase that can modify rifampicin, thereby inactivating its antibiotic activity (PubMed:29398560). Inactivates a broad range of rifamycin antibiotics (PubMed:29398560).</text>
</comment>
<comment type="catalytic activity">
    <reaction evidence="1">
        <text>rifampicin + NADPH + O2 = rifampicin para-naphthoquinone carboxamide + NADP(+) + H2O + H(+)</text>
        <dbReference type="Rhea" id="RHEA:58696"/>
        <dbReference type="ChEBI" id="CHEBI:15377"/>
        <dbReference type="ChEBI" id="CHEBI:15378"/>
        <dbReference type="ChEBI" id="CHEBI:15379"/>
        <dbReference type="ChEBI" id="CHEBI:57783"/>
        <dbReference type="ChEBI" id="CHEBI:58349"/>
        <dbReference type="ChEBI" id="CHEBI:71365"/>
        <dbReference type="ChEBI" id="CHEBI:142731"/>
        <dbReference type="EC" id="1.14.13.211"/>
    </reaction>
    <physiologicalReaction direction="left-to-right" evidence="1">
        <dbReference type="Rhea" id="RHEA:58697"/>
    </physiologicalReaction>
</comment>
<comment type="catalytic activity">
    <reaction evidence="1">
        <text>rifampicin + NADH + O2 = rifampicin para-naphthoquinone carboxamide + NAD(+) + H2O + H(+)</text>
        <dbReference type="Rhea" id="RHEA:58712"/>
        <dbReference type="ChEBI" id="CHEBI:15377"/>
        <dbReference type="ChEBI" id="CHEBI:15378"/>
        <dbReference type="ChEBI" id="CHEBI:15379"/>
        <dbReference type="ChEBI" id="CHEBI:57540"/>
        <dbReference type="ChEBI" id="CHEBI:57945"/>
        <dbReference type="ChEBI" id="CHEBI:71365"/>
        <dbReference type="ChEBI" id="CHEBI:142731"/>
        <dbReference type="EC" id="1.14.13.211"/>
    </reaction>
    <physiologicalReaction direction="left-to-right" evidence="1">
        <dbReference type="Rhea" id="RHEA:58713"/>
    </physiologicalReaction>
</comment>
<comment type="catalytic activity">
    <reaction evidence="1">
        <text>rifamycin SV + NADPH + O2 = rifamycin SV para-naphthoquinone carboxamide + NADP(+) + H2O</text>
        <dbReference type="Rhea" id="RHEA:58676"/>
        <dbReference type="ChEBI" id="CHEBI:15377"/>
        <dbReference type="ChEBI" id="CHEBI:15379"/>
        <dbReference type="ChEBI" id="CHEBI:57783"/>
        <dbReference type="ChEBI" id="CHEBI:58349"/>
        <dbReference type="ChEBI" id="CHEBI:84571"/>
        <dbReference type="ChEBI" id="CHEBI:142728"/>
    </reaction>
    <physiologicalReaction direction="left-to-right" evidence="1">
        <dbReference type="Rhea" id="RHEA:58677"/>
    </physiologicalReaction>
</comment>
<comment type="catalytic activity">
    <reaction evidence="1">
        <text>rifamycin SV + NADH + O2 = rifamycin SV para-naphthoquinone carboxamide + NAD(+) + H2O</text>
        <dbReference type="Rhea" id="RHEA:58688"/>
        <dbReference type="ChEBI" id="CHEBI:15377"/>
        <dbReference type="ChEBI" id="CHEBI:15379"/>
        <dbReference type="ChEBI" id="CHEBI:57540"/>
        <dbReference type="ChEBI" id="CHEBI:57945"/>
        <dbReference type="ChEBI" id="CHEBI:84571"/>
        <dbReference type="ChEBI" id="CHEBI:142728"/>
    </reaction>
    <physiologicalReaction direction="left-to-right" evidence="1">
        <dbReference type="Rhea" id="RHEA:58689"/>
    </physiologicalReaction>
</comment>
<comment type="cofactor">
    <cofactor evidence="1">
        <name>FAD</name>
        <dbReference type="ChEBI" id="CHEBI:57692"/>
    </cofactor>
</comment>
<comment type="similarity">
    <text evidence="3">Belongs to the rifampicin monooxygenase family.</text>
</comment>
<reference key="1">
    <citation type="journal article" date="2011" name="BMC Genomics">
        <title>Genome-wide analysis of the role of GlnR in Streptomyces venezuelae provides new insights into global nitrogen regulation in actinomycetes.</title>
        <authorList>
            <person name="Pullan S.T."/>
            <person name="Chandra G."/>
            <person name="Bibb M.J."/>
            <person name="Merrick M."/>
        </authorList>
    </citation>
    <scope>NUCLEOTIDE SEQUENCE [LARGE SCALE GENOMIC DNA]</scope>
    <source>
        <strain>ATCC 10712 / CBS 650.69 / DSM 40230 / JCM 4526 / NBRC 13096 / PD 04745</strain>
    </source>
</reference>
<reference evidence="4 5" key="2">
    <citation type="journal article" date="2018" name="Cell Chem. Biol.">
        <title>Rox, a Rifamycin Resistance Enzyme with an Unprecedented Mechanism of Action.</title>
        <authorList>
            <person name="Koteva K."/>
            <person name="Cox G."/>
            <person name="Kelso J.K."/>
            <person name="Surette M.D."/>
            <person name="Zubyk H.L."/>
            <person name="Ejim L."/>
            <person name="Stogios P."/>
            <person name="Savchenko A."/>
            <person name="Sorensen D."/>
            <person name="Wright G.D."/>
        </authorList>
    </citation>
    <scope>X-RAY CRYSTALLOGRAPHY (3.32 ANGSTROMS) IN COMPLEXES WITH FAD AND RIFAMPICIN</scope>
    <scope>FUNCTION</scope>
    <scope>CATALYTIC ACTIVITY</scope>
    <scope>COFACTOR</scope>
    <source>
        <strain>ATCC 10712 / CBS 650.69 / DSM 40230 / JCM 4526 / NBRC 13096 / PD 04745</strain>
    </source>
</reference>
<evidence type="ECO:0000269" key="1">
    <source>
    </source>
</evidence>
<evidence type="ECO:0000303" key="2">
    <source>
    </source>
</evidence>
<evidence type="ECO:0000305" key="3"/>
<evidence type="ECO:0007744" key="4">
    <source>
        <dbReference type="PDB" id="5VQB"/>
    </source>
</evidence>
<evidence type="ECO:0007744" key="5">
    <source>
        <dbReference type="PDB" id="6BRD"/>
    </source>
</evidence>
<evidence type="ECO:0007829" key="6">
    <source>
        <dbReference type="PDB" id="5VQB"/>
    </source>
</evidence>
<evidence type="ECO:0007829" key="7">
    <source>
        <dbReference type="PDB" id="6BRD"/>
    </source>
</evidence>
<sequence length="476" mass="52402">MFDVIVVGGGPTGLMLAGELRLHGVRVLVLEKETEPTRQSRAQGLHVRSIEVMAQRGLLERFLERGHTVAVGGFFAGLATSWPERLDTAHSYVLAVPQVITEQLLAEHATALGAEIRRGRALVGLRQDEDGVTVDLADGEQLRARYVVGCDGGRSTVRKLLGVAFPGEPSRVETLLGEMEMTASQEELTSVMTEVRKTQQRFGAMPLGDGVFRVVVPAEGVAEDRTASPTLDEFKQQLRAHAGTDFGVHSPRWLSRFGDATRQAERYRVDRVFLAGDAAHIHPPTGGQGLNLGIQDAFNLGWKLAAEVDGWAPEGLLDTYHAERHPVATEVLDNTRAQIQLMSTEPGPQAVRRLMAELVEFENVNRYLIEKITAISVRYDVGEGHELLGRRMRDLALKHGRLYERMHEGRGLLLDQTGRLSVAGWEDRVDHVVEVSEELDVPAVLLRPDGHVVWAGEDQQELLTRMPAWFGAATAG</sequence>
<accession>F2R776</accession>
<keyword id="KW-0002">3D-structure</keyword>
<keyword id="KW-0274">FAD</keyword>
<keyword id="KW-0285">Flavoprotein</keyword>
<keyword id="KW-0503">Monooxygenase</keyword>
<keyword id="KW-0547">Nucleotide-binding</keyword>
<keyword id="KW-0560">Oxidoreductase</keyword>
<keyword id="KW-1185">Reference proteome</keyword>
<dbReference type="EC" id="1.14.13.211" evidence="1"/>
<dbReference type="EMBL" id="FR845719">
    <property type="protein sequence ID" value="CCA53768.1"/>
    <property type="molecule type" value="Genomic_DNA"/>
</dbReference>
<dbReference type="RefSeq" id="WP_015031687.1">
    <property type="nucleotide sequence ID" value="NZ_JABVZO010000190.1"/>
</dbReference>
<dbReference type="PDB" id="5VQB">
    <property type="method" value="X-ray"/>
    <property type="resolution" value="3.39 A"/>
    <property type="chains" value="A/B/C=1-476"/>
</dbReference>
<dbReference type="PDB" id="6BRD">
    <property type="method" value="X-ray"/>
    <property type="resolution" value="3.32 A"/>
    <property type="chains" value="A/B/C=1-476"/>
</dbReference>
<dbReference type="PDBsum" id="5VQB"/>
<dbReference type="PDBsum" id="6BRD"/>
<dbReference type="SMR" id="F2R776"/>
<dbReference type="STRING" id="953739.SVEN_0481"/>
<dbReference type="CARD" id="ARO:3007209">
    <property type="molecule name" value="Sven_rox"/>
    <property type="mechanism identifier" value="ARO:0001004"/>
    <property type="mechanism name" value="antibiotic inactivation"/>
</dbReference>
<dbReference type="KEGG" id="sve:SVEN_0481"/>
<dbReference type="PATRIC" id="fig|953739.5.peg.6049"/>
<dbReference type="eggNOG" id="COG0654">
    <property type="taxonomic scope" value="Bacteria"/>
</dbReference>
<dbReference type="HOGENOM" id="CLU_009665_20_1_11"/>
<dbReference type="OrthoDB" id="8670884at2"/>
<dbReference type="Proteomes" id="UP000006854">
    <property type="component" value="Chromosome"/>
</dbReference>
<dbReference type="GO" id="GO:0071949">
    <property type="term" value="F:FAD binding"/>
    <property type="evidence" value="ECO:0007669"/>
    <property type="project" value="InterPro"/>
</dbReference>
<dbReference type="GO" id="GO:0016709">
    <property type="term" value="F:oxidoreductase activity, acting on paired donors, with incorporation or reduction of molecular oxygen, NAD(P)H as one donor, and incorporation of one atom of oxygen"/>
    <property type="evidence" value="ECO:0007669"/>
    <property type="project" value="UniProtKB-ARBA"/>
</dbReference>
<dbReference type="Gene3D" id="3.30.70.2450">
    <property type="match status" value="1"/>
</dbReference>
<dbReference type="Gene3D" id="3.40.30.120">
    <property type="match status" value="1"/>
</dbReference>
<dbReference type="Gene3D" id="3.50.50.60">
    <property type="entry name" value="FAD/NAD(P)-binding domain"/>
    <property type="match status" value="1"/>
</dbReference>
<dbReference type="InterPro" id="IPR002938">
    <property type="entry name" value="FAD-bd"/>
</dbReference>
<dbReference type="InterPro" id="IPR036188">
    <property type="entry name" value="FAD/NAD-bd_sf"/>
</dbReference>
<dbReference type="InterPro" id="IPR050641">
    <property type="entry name" value="RIFMO-like"/>
</dbReference>
<dbReference type="NCBIfam" id="NF033145">
    <property type="entry name" value="rif_monoox"/>
    <property type="match status" value="1"/>
</dbReference>
<dbReference type="PANTHER" id="PTHR43004:SF19">
    <property type="entry name" value="BINDING MONOOXYGENASE, PUTATIVE (JCVI)-RELATED"/>
    <property type="match status" value="1"/>
</dbReference>
<dbReference type="PANTHER" id="PTHR43004">
    <property type="entry name" value="TRK SYSTEM POTASSIUM UPTAKE PROTEIN"/>
    <property type="match status" value="1"/>
</dbReference>
<dbReference type="Pfam" id="PF01494">
    <property type="entry name" value="FAD_binding_3"/>
    <property type="match status" value="1"/>
</dbReference>
<dbReference type="Pfam" id="PF21274">
    <property type="entry name" value="Rng_hyd_C"/>
    <property type="match status" value="1"/>
</dbReference>
<dbReference type="PRINTS" id="PR00420">
    <property type="entry name" value="RNGMNOXGNASE"/>
</dbReference>
<dbReference type="SUPFAM" id="SSF51905">
    <property type="entry name" value="FAD/NAD(P)-binding domain"/>
    <property type="match status" value="1"/>
</dbReference>
<proteinExistence type="evidence at protein level"/>
<name>ROX_STRVP</name>